<keyword id="KW-0012">Acyltransferase</keyword>
<keyword id="KW-0963">Cytoplasm</keyword>
<keyword id="KW-0276">Fatty acid metabolism</keyword>
<keyword id="KW-0442">Lipid degradation</keyword>
<keyword id="KW-0443">Lipid metabolism</keyword>
<keyword id="KW-0808">Transferase</keyword>
<protein>
    <recommendedName>
        <fullName evidence="1">3-ketoacyl-CoA thiolase</fullName>
        <ecNumber evidence="1">2.3.1.16</ecNumber>
    </recommendedName>
    <alternativeName>
        <fullName evidence="1">ACSs</fullName>
    </alternativeName>
    <alternativeName>
        <fullName evidence="1">Acetyl-CoA acyltransferase</fullName>
    </alternativeName>
    <alternativeName>
        <fullName evidence="1">Acyl-CoA ligase</fullName>
    </alternativeName>
    <alternativeName>
        <fullName evidence="1">Beta-ketothiolase</fullName>
    </alternativeName>
    <alternativeName>
        <fullName evidence="1">Fatty acid oxidation complex subunit beta</fullName>
    </alternativeName>
</protein>
<gene>
    <name evidence="1" type="primary">fadI</name>
    <name type="ordered locus">EcolC_1311</name>
</gene>
<reference key="1">
    <citation type="submission" date="2008-02" db="EMBL/GenBank/DDBJ databases">
        <title>Complete sequence of Escherichia coli C str. ATCC 8739.</title>
        <authorList>
            <person name="Copeland A."/>
            <person name="Lucas S."/>
            <person name="Lapidus A."/>
            <person name="Glavina del Rio T."/>
            <person name="Dalin E."/>
            <person name="Tice H."/>
            <person name="Bruce D."/>
            <person name="Goodwin L."/>
            <person name="Pitluck S."/>
            <person name="Kiss H."/>
            <person name="Brettin T."/>
            <person name="Detter J.C."/>
            <person name="Han C."/>
            <person name="Kuske C.R."/>
            <person name="Schmutz J."/>
            <person name="Larimer F."/>
            <person name="Land M."/>
            <person name="Hauser L."/>
            <person name="Kyrpides N."/>
            <person name="Mikhailova N."/>
            <person name="Ingram L."/>
            <person name="Richardson P."/>
        </authorList>
    </citation>
    <scope>NUCLEOTIDE SEQUENCE [LARGE SCALE GENOMIC DNA]</scope>
    <source>
        <strain>ATCC 8739 / DSM 1576 / NBRC 3972 / NCIMB 8545 / WDCM 00012 / Crooks</strain>
    </source>
</reference>
<accession>B1IXA4</accession>
<proteinExistence type="inferred from homology"/>
<organism>
    <name type="scientific">Escherichia coli (strain ATCC 8739 / DSM 1576 / NBRC 3972 / NCIMB 8545 / WDCM 00012 / Crooks)</name>
    <dbReference type="NCBI Taxonomy" id="481805"/>
    <lineage>
        <taxon>Bacteria</taxon>
        <taxon>Pseudomonadati</taxon>
        <taxon>Pseudomonadota</taxon>
        <taxon>Gammaproteobacteria</taxon>
        <taxon>Enterobacterales</taxon>
        <taxon>Enterobacteriaceae</taxon>
        <taxon>Escherichia</taxon>
    </lineage>
</organism>
<comment type="function">
    <text evidence="1">Catalyzes the final step of fatty acid oxidation in which acetyl-CoA is released and the CoA ester of a fatty acid two carbons shorter is formed.</text>
</comment>
<comment type="catalytic activity">
    <reaction evidence="1">
        <text>an acyl-CoA + acetyl-CoA = a 3-oxoacyl-CoA + CoA</text>
        <dbReference type="Rhea" id="RHEA:21564"/>
        <dbReference type="ChEBI" id="CHEBI:57287"/>
        <dbReference type="ChEBI" id="CHEBI:57288"/>
        <dbReference type="ChEBI" id="CHEBI:58342"/>
        <dbReference type="ChEBI" id="CHEBI:90726"/>
        <dbReference type="EC" id="2.3.1.16"/>
    </reaction>
</comment>
<comment type="pathway">
    <text evidence="1">Lipid metabolism; fatty acid beta-oxidation.</text>
</comment>
<comment type="subunit">
    <text evidence="1">Heterotetramer of two alpha chains (FadJ) and two beta chains (FadI).</text>
</comment>
<comment type="subcellular location">
    <subcellularLocation>
        <location evidence="1">Cytoplasm</location>
    </subcellularLocation>
</comment>
<comment type="similarity">
    <text evidence="1">Belongs to the thiolase-like superfamily. Thiolase family.</text>
</comment>
<name>FADI_ECOLC</name>
<dbReference type="EC" id="2.3.1.16" evidence="1"/>
<dbReference type="EMBL" id="CP000946">
    <property type="protein sequence ID" value="ACA76977.1"/>
    <property type="molecule type" value="Genomic_DNA"/>
</dbReference>
<dbReference type="RefSeq" id="WP_000531942.1">
    <property type="nucleotide sequence ID" value="NZ_MTFT01000028.1"/>
</dbReference>
<dbReference type="SMR" id="B1IXA4"/>
<dbReference type="KEGG" id="ecl:EcolC_1311"/>
<dbReference type="HOGENOM" id="CLU_031026_2_0_6"/>
<dbReference type="UniPathway" id="UPA00659"/>
<dbReference type="GO" id="GO:0005829">
    <property type="term" value="C:cytosol"/>
    <property type="evidence" value="ECO:0007669"/>
    <property type="project" value="TreeGrafter"/>
</dbReference>
<dbReference type="GO" id="GO:0003988">
    <property type="term" value="F:acetyl-CoA C-acyltransferase activity"/>
    <property type="evidence" value="ECO:0007669"/>
    <property type="project" value="UniProtKB-UniRule"/>
</dbReference>
<dbReference type="GO" id="GO:0006635">
    <property type="term" value="P:fatty acid beta-oxidation"/>
    <property type="evidence" value="ECO:0007669"/>
    <property type="project" value="UniProtKB-UniRule"/>
</dbReference>
<dbReference type="CDD" id="cd00751">
    <property type="entry name" value="thiolase"/>
    <property type="match status" value="1"/>
</dbReference>
<dbReference type="FunFam" id="3.40.47.10:FF:000011">
    <property type="entry name" value="3-ketoacyl-CoA thiolase"/>
    <property type="match status" value="1"/>
</dbReference>
<dbReference type="Gene3D" id="3.40.47.10">
    <property type="match status" value="1"/>
</dbReference>
<dbReference type="HAMAP" id="MF_01618">
    <property type="entry name" value="FadI"/>
    <property type="match status" value="1"/>
</dbReference>
<dbReference type="InterPro" id="IPR012806">
    <property type="entry name" value="Ac-CoA_C-AcTrfase_FadI"/>
</dbReference>
<dbReference type="InterPro" id="IPR002155">
    <property type="entry name" value="Thiolase"/>
</dbReference>
<dbReference type="InterPro" id="IPR016039">
    <property type="entry name" value="Thiolase-like"/>
</dbReference>
<dbReference type="InterPro" id="IPR020615">
    <property type="entry name" value="Thiolase_acyl_enz_int_AS"/>
</dbReference>
<dbReference type="InterPro" id="IPR020610">
    <property type="entry name" value="Thiolase_AS"/>
</dbReference>
<dbReference type="InterPro" id="IPR020617">
    <property type="entry name" value="Thiolase_C"/>
</dbReference>
<dbReference type="InterPro" id="IPR020613">
    <property type="entry name" value="Thiolase_CS"/>
</dbReference>
<dbReference type="InterPro" id="IPR020616">
    <property type="entry name" value="Thiolase_N"/>
</dbReference>
<dbReference type="NCBIfam" id="TIGR01930">
    <property type="entry name" value="AcCoA-C-Actrans"/>
    <property type="match status" value="1"/>
</dbReference>
<dbReference type="NCBIfam" id="TIGR02446">
    <property type="entry name" value="FadI"/>
    <property type="match status" value="1"/>
</dbReference>
<dbReference type="NCBIfam" id="NF006516">
    <property type="entry name" value="PRK08963.1"/>
    <property type="match status" value="1"/>
</dbReference>
<dbReference type="PANTHER" id="PTHR18919:SF107">
    <property type="entry name" value="ACETYL-COA ACETYLTRANSFERASE, CYTOSOLIC"/>
    <property type="match status" value="1"/>
</dbReference>
<dbReference type="PANTHER" id="PTHR18919">
    <property type="entry name" value="ACETYL-COA C-ACYLTRANSFERASE"/>
    <property type="match status" value="1"/>
</dbReference>
<dbReference type="Pfam" id="PF02803">
    <property type="entry name" value="Thiolase_C"/>
    <property type="match status" value="1"/>
</dbReference>
<dbReference type="Pfam" id="PF00108">
    <property type="entry name" value="Thiolase_N"/>
    <property type="match status" value="1"/>
</dbReference>
<dbReference type="PIRSF" id="PIRSF000429">
    <property type="entry name" value="Ac-CoA_Ac_transf"/>
    <property type="match status" value="1"/>
</dbReference>
<dbReference type="SUPFAM" id="SSF53901">
    <property type="entry name" value="Thiolase-like"/>
    <property type="match status" value="2"/>
</dbReference>
<dbReference type="PROSITE" id="PS00098">
    <property type="entry name" value="THIOLASE_1"/>
    <property type="match status" value="1"/>
</dbReference>
<dbReference type="PROSITE" id="PS00737">
    <property type="entry name" value="THIOLASE_2"/>
    <property type="match status" value="1"/>
</dbReference>
<dbReference type="PROSITE" id="PS00099">
    <property type="entry name" value="THIOLASE_3"/>
    <property type="match status" value="1"/>
</dbReference>
<sequence>MGQVLPLVTRQGDRIAIVSGLRTPFARQATAFHGIPAVDLGKMVVGELLARSEIPAEVIEQLVFGQVVQMPEAPNIAREIVLGTGMNVHTDAYSVSRACATSFQAVANVAESLMAGTIRAGIAGGADSSSVLPIGVSKKLARVLVDVNKARTMSQRLKLFSRLRLRDLMPVPPAVAEYSTGLRMGDTAEQMAKTYGITREQQDALAHRSHQRAAQAWSDGKLKEEVMTAFIPPYKQPFVEDNNIRGNSSLADYAKLRPAFDRKHGTVTAANSTPLTDGAAAVILMTESRAKELGLVPLGYLRSYAFTAIDVWQDMLLGPAWSTPLALERAGLTMSDLTLIDMHEAFAAQTLANIQLLGSERFAREVLGRAHATGEVDDSKFNVLGGSIAYGHPFAATGARMITQTLHELRRRGGGFGLVTACAAGGLGAAMVLEAE</sequence>
<feature type="chain" id="PRO_1000088064" description="3-ketoacyl-CoA thiolase">
    <location>
        <begin position="1"/>
        <end position="436"/>
    </location>
</feature>
<feature type="active site" description="Acyl-thioester intermediate" evidence="1">
    <location>
        <position position="99"/>
    </location>
</feature>
<feature type="active site" description="Proton acceptor" evidence="1">
    <location>
        <position position="392"/>
    </location>
</feature>
<feature type="active site" description="Proton acceptor" evidence="1">
    <location>
        <position position="422"/>
    </location>
</feature>
<evidence type="ECO:0000255" key="1">
    <source>
        <dbReference type="HAMAP-Rule" id="MF_01618"/>
    </source>
</evidence>